<accession>C3MTQ0</accession>
<proteinExistence type="inferred from homology"/>
<feature type="chain" id="PRO_1000212865" description="Ribonuclease P protein component 4">
    <location>
        <begin position="1"/>
        <end position="104"/>
    </location>
</feature>
<feature type="binding site" evidence="1">
    <location>
        <position position="57"/>
    </location>
    <ligand>
        <name>Zn(2+)</name>
        <dbReference type="ChEBI" id="CHEBI:29105"/>
    </ligand>
</feature>
<feature type="binding site" evidence="1">
    <location>
        <position position="60"/>
    </location>
    <ligand>
        <name>Zn(2+)</name>
        <dbReference type="ChEBI" id="CHEBI:29105"/>
    </ligand>
</feature>
<feature type="binding site" evidence="1">
    <location>
        <position position="83"/>
    </location>
    <ligand>
        <name>Zn(2+)</name>
        <dbReference type="ChEBI" id="CHEBI:29105"/>
    </ligand>
</feature>
<feature type="binding site" evidence="1">
    <location>
        <position position="86"/>
    </location>
    <ligand>
        <name>Zn(2+)</name>
        <dbReference type="ChEBI" id="CHEBI:29105"/>
    </ligand>
</feature>
<dbReference type="EC" id="3.1.26.5" evidence="1"/>
<dbReference type="EMBL" id="CP001400">
    <property type="protein sequence ID" value="ACP36934.1"/>
    <property type="molecule type" value="Genomic_DNA"/>
</dbReference>
<dbReference type="RefSeq" id="WP_012710221.1">
    <property type="nucleotide sequence ID" value="NC_012588.1"/>
</dbReference>
<dbReference type="SMR" id="C3MTQ0"/>
<dbReference type="KEGG" id="sia:M1425_0042"/>
<dbReference type="HOGENOM" id="CLU_079140_3_1_2"/>
<dbReference type="Proteomes" id="UP000001350">
    <property type="component" value="Chromosome"/>
</dbReference>
<dbReference type="GO" id="GO:0005737">
    <property type="term" value="C:cytoplasm"/>
    <property type="evidence" value="ECO:0007669"/>
    <property type="project" value="UniProtKB-SubCell"/>
</dbReference>
<dbReference type="GO" id="GO:0030677">
    <property type="term" value="C:ribonuclease P complex"/>
    <property type="evidence" value="ECO:0007669"/>
    <property type="project" value="UniProtKB-UniRule"/>
</dbReference>
<dbReference type="GO" id="GO:0004526">
    <property type="term" value="F:ribonuclease P activity"/>
    <property type="evidence" value="ECO:0007669"/>
    <property type="project" value="UniProtKB-UniRule"/>
</dbReference>
<dbReference type="GO" id="GO:0008270">
    <property type="term" value="F:zinc ion binding"/>
    <property type="evidence" value="ECO:0007669"/>
    <property type="project" value="UniProtKB-UniRule"/>
</dbReference>
<dbReference type="GO" id="GO:0001682">
    <property type="term" value="P:tRNA 5'-leader removal"/>
    <property type="evidence" value="ECO:0007669"/>
    <property type="project" value="UniProtKB-UniRule"/>
</dbReference>
<dbReference type="Gene3D" id="6.20.50.20">
    <property type="match status" value="1"/>
</dbReference>
<dbReference type="Gene3D" id="1.20.5.420">
    <property type="entry name" value="Immunoglobulin FC, subunit C"/>
    <property type="match status" value="1"/>
</dbReference>
<dbReference type="HAMAP" id="MF_00757">
    <property type="entry name" value="RNase_P_4"/>
    <property type="match status" value="1"/>
</dbReference>
<dbReference type="InterPro" id="IPR016432">
    <property type="entry name" value="RNP4"/>
</dbReference>
<dbReference type="InterPro" id="IPR007175">
    <property type="entry name" value="Rpr2/Snm1/Rpp21"/>
</dbReference>
<dbReference type="PANTHER" id="PTHR14742:SF0">
    <property type="entry name" value="RIBONUCLEASE P PROTEIN SUBUNIT P21"/>
    <property type="match status" value="1"/>
</dbReference>
<dbReference type="PANTHER" id="PTHR14742">
    <property type="entry name" value="RIBONUCLEASE P SUBUNIT P21"/>
    <property type="match status" value="1"/>
</dbReference>
<dbReference type="Pfam" id="PF04032">
    <property type="entry name" value="Rpr2"/>
    <property type="match status" value="1"/>
</dbReference>
<dbReference type="PIRSF" id="PIRSF004878">
    <property type="entry name" value="RNase_P_4"/>
    <property type="match status" value="1"/>
</dbReference>
<comment type="function">
    <text evidence="1">Part of ribonuclease P, a protein complex that generates mature tRNA molecules by cleaving their 5'-ends.</text>
</comment>
<comment type="catalytic activity">
    <reaction evidence="1">
        <text>Endonucleolytic cleavage of RNA, removing 5'-extranucleotides from tRNA precursor.</text>
        <dbReference type="EC" id="3.1.26.5"/>
    </reaction>
</comment>
<comment type="cofactor">
    <cofactor evidence="1">
        <name>Zn(2+)</name>
        <dbReference type="ChEBI" id="CHEBI:29105"/>
    </cofactor>
    <text evidence="1">Binds 1 zinc ion per subunit.</text>
</comment>
<comment type="subunit">
    <text evidence="1">Consists of a catalytic RNA component and at least 4-5 protein subunits.</text>
</comment>
<comment type="subcellular location">
    <subcellularLocation>
        <location evidence="1">Cytoplasm</location>
    </subcellularLocation>
</comment>
<comment type="similarity">
    <text evidence="1">Belongs to the eukaryotic/archaeal RNase P protein component 4 family.</text>
</comment>
<reference key="1">
    <citation type="journal article" date="2009" name="Proc. Natl. Acad. Sci. U.S.A.">
        <title>Biogeography of the Sulfolobus islandicus pan-genome.</title>
        <authorList>
            <person name="Reno M.L."/>
            <person name="Held N.L."/>
            <person name="Fields C.J."/>
            <person name="Burke P.V."/>
            <person name="Whitaker R.J."/>
        </authorList>
    </citation>
    <scope>NUCLEOTIDE SEQUENCE [LARGE SCALE GENOMIC DNA]</scope>
    <source>
        <strain>M.14.25 / Kamchatka #1</strain>
    </source>
</reference>
<protein>
    <recommendedName>
        <fullName evidence="1">Ribonuclease P protein component 4</fullName>
        <shortName evidence="1">RNase P component 4</shortName>
        <ecNumber evidence="1">3.1.26.5</ecNumber>
    </recommendedName>
    <alternativeName>
        <fullName evidence="1">Rpp21</fullName>
    </alternativeName>
</protein>
<organism>
    <name type="scientific">Saccharolobus islandicus (strain M.14.25 / Kamchatka #1)</name>
    <name type="common">Sulfolobus islandicus</name>
    <dbReference type="NCBI Taxonomy" id="427317"/>
    <lineage>
        <taxon>Archaea</taxon>
        <taxon>Thermoproteota</taxon>
        <taxon>Thermoprotei</taxon>
        <taxon>Sulfolobales</taxon>
        <taxon>Sulfolobaceae</taxon>
        <taxon>Saccharolobus</taxon>
    </lineage>
</organism>
<name>RNP4_SACI4</name>
<evidence type="ECO:0000255" key="1">
    <source>
        <dbReference type="HAMAP-Rule" id="MF_00757"/>
    </source>
</evidence>
<keyword id="KW-0963">Cytoplasm</keyword>
<keyword id="KW-0255">Endonuclease</keyword>
<keyword id="KW-0378">Hydrolase</keyword>
<keyword id="KW-0479">Metal-binding</keyword>
<keyword id="KW-0540">Nuclease</keyword>
<keyword id="KW-0819">tRNA processing</keyword>
<keyword id="KW-0862">Zinc</keyword>
<sequence length="104" mass="12608">MRIKNKIKKRIIELIELAYITARKGDLELAREYIKLAEMYSRKGRVKIPLKYKRMFCRKCYTPLITGVTERRRIRSKILIRTCLICNWQRRYVLSRNKGSNKEN</sequence>
<gene>
    <name evidence="1" type="primary">rnp4</name>
    <name type="ordered locus">M1425_0042</name>
</gene>